<feature type="chain" id="PRO_0000252114" description="Protein ImpA">
    <location>
        <begin position="1"/>
        <end position="145"/>
    </location>
</feature>
<feature type="chain" id="PRO_0000252115" description="Protein ImpA'">
    <location>
        <begin position="29"/>
        <end position="145"/>
    </location>
</feature>
<feature type="active site" description="For autocatalytic cleavage activity" evidence="1">
    <location>
        <position position="64"/>
    </location>
</feature>
<feature type="active site" description="For autocatalytic cleavage activity" evidence="1">
    <location>
        <position position="101"/>
    </location>
</feature>
<feature type="site" description="Cleavage; by autolysis" evidence="1">
    <location>
        <begin position="28"/>
        <end position="29"/>
    </location>
</feature>
<organism>
    <name type="scientific">Salmonella choleraesuis (strain SC-B67)</name>
    <dbReference type="NCBI Taxonomy" id="321314"/>
    <lineage>
        <taxon>Bacteria</taxon>
        <taxon>Pseudomonadati</taxon>
        <taxon>Pseudomonadota</taxon>
        <taxon>Gammaproteobacteria</taxon>
        <taxon>Enterobacterales</taxon>
        <taxon>Enterobacteriaceae</taxon>
        <taxon>Salmonella</taxon>
    </lineage>
</organism>
<dbReference type="EC" id="3.4.21.-"/>
<dbReference type="EMBL" id="AY509004">
    <property type="protein sequence ID" value="AAS76416.1"/>
    <property type="molecule type" value="Genomic_DNA"/>
</dbReference>
<dbReference type="SMR" id="Q5J3U9"/>
<dbReference type="MEROPS" id="S24.003"/>
<dbReference type="KEGG" id="sec:SCH_138"/>
<dbReference type="HOGENOM" id="CLU_066192_0_0_6"/>
<dbReference type="Proteomes" id="UP000000538">
    <property type="component" value="Plasmid pSC138"/>
</dbReference>
<dbReference type="GO" id="GO:0003677">
    <property type="term" value="F:DNA binding"/>
    <property type="evidence" value="ECO:0007669"/>
    <property type="project" value="InterPro"/>
</dbReference>
<dbReference type="GO" id="GO:0008236">
    <property type="term" value="F:serine-type peptidase activity"/>
    <property type="evidence" value="ECO:0007669"/>
    <property type="project" value="UniProtKB-KW"/>
</dbReference>
<dbReference type="GO" id="GO:0006281">
    <property type="term" value="P:DNA repair"/>
    <property type="evidence" value="ECO:0007669"/>
    <property type="project" value="UniProtKB-KW"/>
</dbReference>
<dbReference type="GO" id="GO:0006508">
    <property type="term" value="P:proteolysis"/>
    <property type="evidence" value="ECO:0007669"/>
    <property type="project" value="UniProtKB-KW"/>
</dbReference>
<dbReference type="GO" id="GO:0006355">
    <property type="term" value="P:regulation of DNA-templated transcription"/>
    <property type="evidence" value="ECO:0007669"/>
    <property type="project" value="InterPro"/>
</dbReference>
<dbReference type="GO" id="GO:0009432">
    <property type="term" value="P:SOS response"/>
    <property type="evidence" value="ECO:0007669"/>
    <property type="project" value="UniProtKB-KW"/>
</dbReference>
<dbReference type="CDD" id="cd06529">
    <property type="entry name" value="S24_LexA-like"/>
    <property type="match status" value="1"/>
</dbReference>
<dbReference type="Gene3D" id="2.10.109.10">
    <property type="entry name" value="Umud Fragment, subunit A"/>
    <property type="match status" value="1"/>
</dbReference>
<dbReference type="InterPro" id="IPR039418">
    <property type="entry name" value="LexA-like"/>
</dbReference>
<dbReference type="InterPro" id="IPR036286">
    <property type="entry name" value="LexA/Signal_pep-like_sf"/>
</dbReference>
<dbReference type="InterPro" id="IPR050077">
    <property type="entry name" value="LexA_repressor"/>
</dbReference>
<dbReference type="InterPro" id="IPR006197">
    <property type="entry name" value="Peptidase_S24_LexA"/>
</dbReference>
<dbReference type="InterPro" id="IPR015927">
    <property type="entry name" value="Peptidase_S24_S26A/B/C"/>
</dbReference>
<dbReference type="NCBIfam" id="NF007621">
    <property type="entry name" value="PRK10276.1"/>
    <property type="match status" value="1"/>
</dbReference>
<dbReference type="PANTHER" id="PTHR33516">
    <property type="entry name" value="LEXA REPRESSOR"/>
    <property type="match status" value="1"/>
</dbReference>
<dbReference type="PANTHER" id="PTHR33516:SF2">
    <property type="entry name" value="LEXA REPRESSOR-RELATED"/>
    <property type="match status" value="1"/>
</dbReference>
<dbReference type="Pfam" id="PF00717">
    <property type="entry name" value="Peptidase_S24"/>
    <property type="match status" value="1"/>
</dbReference>
<dbReference type="PRINTS" id="PR00726">
    <property type="entry name" value="LEXASERPTASE"/>
</dbReference>
<dbReference type="SUPFAM" id="SSF51306">
    <property type="entry name" value="LexA/Signal peptidase"/>
    <property type="match status" value="1"/>
</dbReference>
<comment type="function">
    <text evidence="1">Involved in UV protection and mutation.</text>
</comment>
<comment type="similarity">
    <text evidence="2">Belongs to the peptidase S24 family.</text>
</comment>
<name>IMPA_SALCH</name>
<accession>Q5J3U9</accession>
<evidence type="ECO:0000250" key="1"/>
<evidence type="ECO:0000305" key="2"/>
<protein>
    <recommendedName>
        <fullName>Protein ImpA</fullName>
        <ecNumber>3.4.21.-</ecNumber>
    </recommendedName>
    <component>
        <recommendedName>
            <fullName>Protein ImpA'</fullName>
        </recommendedName>
    </component>
</protein>
<gene>
    <name type="primary">impA</name>
    <name type="ordered locus">SCH_138</name>
</gene>
<sequence>MSTVYHRPADPSGDDSYVRPLFADRCQAGFPSPATDYAEQELDLNSYCISRPAATFFLRASGESMNQAGVQNGDLLVVDRAEKPQHGDIVIAEIDGEFTVKRLLLRPRPALEPVSDSPEFRTLYPENICIFGVVTHVIHRTRELR</sequence>
<reference key="1">
    <citation type="journal article" date="2005" name="Nucleic Acids Res.">
        <title>The genome sequence of Salmonella enterica serovar Choleraesuis, a highly invasive and resistant zoonotic pathogen.</title>
        <authorList>
            <person name="Chiu C.-H."/>
            <person name="Tang P."/>
            <person name="Chu C."/>
            <person name="Hu S."/>
            <person name="Bao Q."/>
            <person name="Yu J."/>
            <person name="Chou Y.-Y."/>
            <person name="Wang H.-S."/>
            <person name="Lee Y.-S."/>
        </authorList>
    </citation>
    <scope>NUCLEOTIDE SEQUENCE [LARGE SCALE GENOMIC DNA]</scope>
    <source>
        <strain>SC-B67</strain>
    </source>
</reference>
<proteinExistence type="inferred from homology"/>
<keyword id="KW-0068">Autocatalytic cleavage</keyword>
<keyword id="KW-0227">DNA damage</keyword>
<keyword id="KW-0234">DNA repair</keyword>
<keyword id="KW-0378">Hydrolase</keyword>
<keyword id="KW-0614">Plasmid</keyword>
<keyword id="KW-0645">Protease</keyword>
<keyword id="KW-0720">Serine protease</keyword>
<keyword id="KW-0741">SOS mutagenesis</keyword>
<keyword id="KW-0742">SOS response</keyword>
<geneLocation type="plasmid">
    <name>pSC138</name>
</geneLocation>